<gene>
    <name type="primary">MKRN1</name>
    <name type="synonym">RNF61</name>
</gene>
<dbReference type="EC" id="2.3.2.27" evidence="9"/>
<dbReference type="EMBL" id="AF192784">
    <property type="protein sequence ID" value="AAF17487.1"/>
    <property type="molecule type" value="mRNA"/>
</dbReference>
<dbReference type="EMBL" id="AF192793">
    <property type="protein sequence ID" value="AAF18979.1"/>
    <property type="molecule type" value="Genomic_DNA"/>
</dbReference>
<dbReference type="EMBL" id="AF192789">
    <property type="protein sequence ID" value="AAF18979.1"/>
    <property type="status" value="JOINED"/>
    <property type="molecule type" value="Genomic_DNA"/>
</dbReference>
<dbReference type="EMBL" id="AF192790">
    <property type="protein sequence ID" value="AAF18979.1"/>
    <property type="status" value="JOINED"/>
    <property type="molecule type" value="Genomic_DNA"/>
</dbReference>
<dbReference type="EMBL" id="AF192791">
    <property type="protein sequence ID" value="AAF18979.1"/>
    <property type="status" value="JOINED"/>
    <property type="molecule type" value="Genomic_DNA"/>
</dbReference>
<dbReference type="EMBL" id="AF192792">
    <property type="protein sequence ID" value="AAF18979.1"/>
    <property type="status" value="JOINED"/>
    <property type="molecule type" value="Genomic_DNA"/>
</dbReference>
<dbReference type="EMBL" id="AM236048">
    <property type="protein sequence ID" value="CAJ84705.1"/>
    <property type="molecule type" value="mRNA"/>
</dbReference>
<dbReference type="EMBL" id="AF117233">
    <property type="protein sequence ID" value="AAF17214.1"/>
    <property type="molecule type" value="mRNA"/>
</dbReference>
<dbReference type="EMBL" id="AL136812">
    <property type="protein sequence ID" value="CAB66746.1"/>
    <property type="molecule type" value="mRNA"/>
</dbReference>
<dbReference type="EMBL" id="AK127030">
    <property type="protein sequence ID" value="BAG54426.1"/>
    <property type="molecule type" value="mRNA"/>
</dbReference>
<dbReference type="EMBL" id="AK315552">
    <property type="protein sequence ID" value="BAG37929.1"/>
    <property type="molecule type" value="mRNA"/>
</dbReference>
<dbReference type="EMBL" id="AC069335">
    <property type="status" value="NOT_ANNOTATED_CDS"/>
    <property type="molecule type" value="Genomic_DNA"/>
</dbReference>
<dbReference type="EMBL" id="CH236950">
    <property type="protein sequence ID" value="EAL24026.1"/>
    <property type="molecule type" value="Genomic_DNA"/>
</dbReference>
<dbReference type="EMBL" id="CH471070">
    <property type="protein sequence ID" value="EAW83949.1"/>
    <property type="molecule type" value="Genomic_DNA"/>
</dbReference>
<dbReference type="EMBL" id="BC025955">
    <property type="protein sequence ID" value="AAH25955.1"/>
    <property type="molecule type" value="mRNA"/>
</dbReference>
<dbReference type="EMBL" id="BC037400">
    <property type="protein sequence ID" value="AAH37400.1"/>
    <property type="molecule type" value="mRNA"/>
</dbReference>
<dbReference type="EMBL" id="BC064838">
    <property type="protein sequence ID" value="AAH64838.1"/>
    <property type="molecule type" value="mRNA"/>
</dbReference>
<dbReference type="EMBL" id="AB209298">
    <property type="protein sequence ID" value="BAD92535.1"/>
    <property type="molecule type" value="mRNA"/>
</dbReference>
<dbReference type="CCDS" id="CCDS47725.1">
    <molecule id="Q9UHC7-4"/>
</dbReference>
<dbReference type="CCDS" id="CCDS5860.1">
    <molecule id="Q9UHC7-1"/>
</dbReference>
<dbReference type="RefSeq" id="NP_001138597.1">
    <molecule id="Q9UHC7-4"/>
    <property type="nucleotide sequence ID" value="NM_001145125.2"/>
</dbReference>
<dbReference type="RefSeq" id="NP_038474.2">
    <molecule id="Q9UHC7-1"/>
    <property type="nucleotide sequence ID" value="NM_013446.4"/>
</dbReference>
<dbReference type="RefSeq" id="XP_011514299.1">
    <molecule id="Q9UHC7-2"/>
    <property type="nucleotide sequence ID" value="XM_011515997.4"/>
</dbReference>
<dbReference type="RefSeq" id="XP_011514300.1">
    <molecule id="Q9UHC7-2"/>
    <property type="nucleotide sequence ID" value="XM_011515998.2"/>
</dbReference>
<dbReference type="RefSeq" id="XP_047276054.1">
    <molecule id="Q9UHC7-2"/>
    <property type="nucleotide sequence ID" value="XM_047420098.1"/>
</dbReference>
<dbReference type="RefSeq" id="XP_047276055.1">
    <molecule id="Q9UHC7-2"/>
    <property type="nucleotide sequence ID" value="XM_047420099.1"/>
</dbReference>
<dbReference type="BioGRID" id="117141">
    <property type="interactions" value="217"/>
</dbReference>
<dbReference type="FunCoup" id="Q9UHC7">
    <property type="interactions" value="1300"/>
</dbReference>
<dbReference type="IntAct" id="Q9UHC7">
    <property type="interactions" value="71"/>
</dbReference>
<dbReference type="MINT" id="Q9UHC7"/>
<dbReference type="STRING" id="9606.ENSP00000255977"/>
<dbReference type="GlyGen" id="Q9UHC7">
    <property type="glycosylation" value="2 sites, 1 O-linked glycan (1 site)"/>
</dbReference>
<dbReference type="iPTMnet" id="Q9UHC7"/>
<dbReference type="PhosphoSitePlus" id="Q9UHC7"/>
<dbReference type="BioMuta" id="MKRN1"/>
<dbReference type="DMDM" id="67477468"/>
<dbReference type="jPOST" id="Q9UHC7"/>
<dbReference type="MassIVE" id="Q9UHC7"/>
<dbReference type="PaxDb" id="9606-ENSP00000255977"/>
<dbReference type="PeptideAtlas" id="Q9UHC7"/>
<dbReference type="ProteomicsDB" id="84313">
    <molecule id="Q9UHC7-1"/>
</dbReference>
<dbReference type="ProteomicsDB" id="84314">
    <molecule id="Q9UHC7-2"/>
</dbReference>
<dbReference type="ProteomicsDB" id="84315">
    <molecule id="Q9UHC7-3"/>
</dbReference>
<dbReference type="ProteomicsDB" id="84316">
    <molecule id="Q9UHC7-4"/>
</dbReference>
<dbReference type="Pumba" id="Q9UHC7"/>
<dbReference type="Antibodypedia" id="437">
    <property type="antibodies" value="355 antibodies from 29 providers"/>
</dbReference>
<dbReference type="DNASU" id="23608"/>
<dbReference type="Ensembl" id="ENST00000255977.7">
    <molecule id="Q9UHC7-1"/>
    <property type="protein sequence ID" value="ENSP00000255977.2"/>
    <property type="gene ID" value="ENSG00000133606.11"/>
</dbReference>
<dbReference type="Ensembl" id="ENST00000443720.6">
    <molecule id="Q9UHC7-4"/>
    <property type="protein sequence ID" value="ENSP00000416369.2"/>
    <property type="gene ID" value="ENSG00000133606.11"/>
</dbReference>
<dbReference type="Ensembl" id="ENST00000474576.5">
    <molecule id="Q9UHC7-2"/>
    <property type="protein sequence ID" value="ENSP00000417863.1"/>
    <property type="gene ID" value="ENSG00000133606.11"/>
</dbReference>
<dbReference type="GeneID" id="23608"/>
<dbReference type="KEGG" id="hsa:23608"/>
<dbReference type="MANE-Select" id="ENST00000255977.7">
    <property type="protein sequence ID" value="ENSP00000255977.2"/>
    <property type="RefSeq nucleotide sequence ID" value="NM_013446.4"/>
    <property type="RefSeq protein sequence ID" value="NP_038474.2"/>
</dbReference>
<dbReference type="UCSC" id="uc003vvt.2">
    <molecule id="Q9UHC7-1"/>
    <property type="organism name" value="human"/>
</dbReference>
<dbReference type="AGR" id="HGNC:7112"/>
<dbReference type="CTD" id="23608"/>
<dbReference type="DisGeNET" id="23608"/>
<dbReference type="GeneCards" id="MKRN1"/>
<dbReference type="HGNC" id="HGNC:7112">
    <property type="gene designation" value="MKRN1"/>
</dbReference>
<dbReference type="HPA" id="ENSG00000133606">
    <property type="expression patterns" value="Low tissue specificity"/>
</dbReference>
<dbReference type="MIM" id="607754">
    <property type="type" value="gene"/>
</dbReference>
<dbReference type="neXtProt" id="NX_Q9UHC7"/>
<dbReference type="OpenTargets" id="ENSG00000133606"/>
<dbReference type="PharmGKB" id="PA30831"/>
<dbReference type="VEuPathDB" id="HostDB:ENSG00000133606"/>
<dbReference type="eggNOG" id="KOG1039">
    <property type="taxonomic scope" value="Eukaryota"/>
</dbReference>
<dbReference type="GeneTree" id="ENSGT00950000183077"/>
<dbReference type="HOGENOM" id="CLU_040815_4_1_1"/>
<dbReference type="InParanoid" id="Q9UHC7"/>
<dbReference type="OMA" id="QQTNVEM"/>
<dbReference type="OrthoDB" id="411372at2759"/>
<dbReference type="PAN-GO" id="Q9UHC7">
    <property type="GO annotations" value="2 GO annotations based on evolutionary models"/>
</dbReference>
<dbReference type="PhylomeDB" id="Q9UHC7"/>
<dbReference type="TreeFam" id="TF315108"/>
<dbReference type="PathwayCommons" id="Q9UHC7"/>
<dbReference type="Reactome" id="R-HSA-198323">
    <property type="pathway name" value="AKT phosphorylates targets in the cytosol"/>
</dbReference>
<dbReference type="Reactome" id="R-HSA-8948751">
    <property type="pathway name" value="Regulation of PTEN stability and activity"/>
</dbReference>
<dbReference type="Reactome" id="R-HSA-983168">
    <property type="pathway name" value="Antigen processing: Ubiquitination &amp; Proteasome degradation"/>
</dbReference>
<dbReference type="SignaLink" id="Q9UHC7"/>
<dbReference type="SIGNOR" id="Q9UHC7"/>
<dbReference type="UniPathway" id="UPA00143"/>
<dbReference type="BioGRID-ORCS" id="23608">
    <property type="hits" value="144 hits in 1165 CRISPR screens"/>
</dbReference>
<dbReference type="ChiTaRS" id="MKRN1">
    <property type="organism name" value="human"/>
</dbReference>
<dbReference type="GenomeRNAi" id="23608"/>
<dbReference type="Pharos" id="Q9UHC7">
    <property type="development level" value="Tbio"/>
</dbReference>
<dbReference type="PRO" id="PR:Q9UHC7"/>
<dbReference type="Proteomes" id="UP000005640">
    <property type="component" value="Chromosome 7"/>
</dbReference>
<dbReference type="RNAct" id="Q9UHC7">
    <property type="molecule type" value="protein"/>
</dbReference>
<dbReference type="Bgee" id="ENSG00000133606">
    <property type="expression patterns" value="Expressed in sperm and 214 other cell types or tissues"/>
</dbReference>
<dbReference type="ExpressionAtlas" id="Q9UHC7">
    <property type="expression patterns" value="baseline and differential"/>
</dbReference>
<dbReference type="GO" id="GO:0005829">
    <property type="term" value="C:cytosol"/>
    <property type="evidence" value="ECO:0000304"/>
    <property type="project" value="Reactome"/>
</dbReference>
<dbReference type="GO" id="GO:0003723">
    <property type="term" value="F:RNA binding"/>
    <property type="evidence" value="ECO:0007005"/>
    <property type="project" value="UniProtKB"/>
</dbReference>
<dbReference type="GO" id="GO:0061630">
    <property type="term" value="F:ubiquitin protein ligase activity"/>
    <property type="evidence" value="ECO:0000314"/>
    <property type="project" value="FlyBase"/>
</dbReference>
<dbReference type="GO" id="GO:0008270">
    <property type="term" value="F:zinc ion binding"/>
    <property type="evidence" value="ECO:0007669"/>
    <property type="project" value="UniProtKB-KW"/>
</dbReference>
<dbReference type="GO" id="GO:0000209">
    <property type="term" value="P:protein polyubiquitination"/>
    <property type="evidence" value="ECO:0000314"/>
    <property type="project" value="FlyBase"/>
</dbReference>
<dbReference type="GO" id="GO:0016567">
    <property type="term" value="P:protein ubiquitination"/>
    <property type="evidence" value="ECO:0000318"/>
    <property type="project" value="GO_Central"/>
</dbReference>
<dbReference type="CDD" id="cd16730">
    <property type="entry name" value="RING-HC_MKRN1_3"/>
    <property type="match status" value="1"/>
</dbReference>
<dbReference type="FunFam" id="3.30.40.10:FF:000117">
    <property type="entry name" value="Probable E3 ubiquitin-protein ligase makorin-1"/>
    <property type="match status" value="1"/>
</dbReference>
<dbReference type="FunFam" id="4.10.1000.10:FF:000044">
    <property type="entry name" value="Probable E3 ubiquitin-protein ligase makorin-2"/>
    <property type="match status" value="1"/>
</dbReference>
<dbReference type="Gene3D" id="2.30.30.1190">
    <property type="match status" value="1"/>
</dbReference>
<dbReference type="Gene3D" id="4.10.1000.10">
    <property type="entry name" value="Zinc finger, CCCH-type"/>
    <property type="match status" value="2"/>
</dbReference>
<dbReference type="Gene3D" id="3.30.40.10">
    <property type="entry name" value="Zinc/RING finger domain, C3HC4 (zinc finger)"/>
    <property type="match status" value="1"/>
</dbReference>
<dbReference type="InterPro" id="IPR045072">
    <property type="entry name" value="MKRN-like"/>
</dbReference>
<dbReference type="InterPro" id="IPR031644">
    <property type="entry name" value="MKRN1_C"/>
</dbReference>
<dbReference type="InterPro" id="IPR041367">
    <property type="entry name" value="Znf-CCCH_4"/>
</dbReference>
<dbReference type="InterPro" id="IPR018957">
    <property type="entry name" value="Znf_C3HC4_RING-type"/>
</dbReference>
<dbReference type="InterPro" id="IPR000571">
    <property type="entry name" value="Znf_CCCH"/>
</dbReference>
<dbReference type="InterPro" id="IPR036855">
    <property type="entry name" value="Znf_CCCH_sf"/>
</dbReference>
<dbReference type="InterPro" id="IPR001841">
    <property type="entry name" value="Znf_RING"/>
</dbReference>
<dbReference type="InterPro" id="IPR013083">
    <property type="entry name" value="Znf_RING/FYVE/PHD"/>
</dbReference>
<dbReference type="InterPro" id="IPR017907">
    <property type="entry name" value="Znf_RING_CS"/>
</dbReference>
<dbReference type="PANTHER" id="PTHR11224:SF37">
    <property type="entry name" value="E3 UBIQUITIN-PROTEIN LIGASE MAKORIN-1"/>
    <property type="match status" value="1"/>
</dbReference>
<dbReference type="PANTHER" id="PTHR11224">
    <property type="entry name" value="MAKORIN-RELATED"/>
    <property type="match status" value="1"/>
</dbReference>
<dbReference type="Pfam" id="PF15815">
    <property type="entry name" value="MKRN1_C"/>
    <property type="match status" value="1"/>
</dbReference>
<dbReference type="Pfam" id="PF00097">
    <property type="entry name" value="zf-C3HC4"/>
    <property type="match status" value="1"/>
</dbReference>
<dbReference type="Pfam" id="PF14608">
    <property type="entry name" value="zf-CCCH_2"/>
    <property type="match status" value="1"/>
</dbReference>
<dbReference type="Pfam" id="PF18044">
    <property type="entry name" value="zf-CCCH_4"/>
    <property type="match status" value="3"/>
</dbReference>
<dbReference type="SMART" id="SM00184">
    <property type="entry name" value="RING"/>
    <property type="match status" value="1"/>
</dbReference>
<dbReference type="SMART" id="SM00356">
    <property type="entry name" value="ZnF_C3H1"/>
    <property type="match status" value="4"/>
</dbReference>
<dbReference type="SUPFAM" id="SSF90229">
    <property type="entry name" value="CCCH zinc finger"/>
    <property type="match status" value="3"/>
</dbReference>
<dbReference type="SUPFAM" id="SSF57850">
    <property type="entry name" value="RING/U-box"/>
    <property type="match status" value="1"/>
</dbReference>
<dbReference type="PROSITE" id="PS50103">
    <property type="entry name" value="ZF_C3H1"/>
    <property type="match status" value="4"/>
</dbReference>
<dbReference type="PROSITE" id="PS00518">
    <property type="entry name" value="ZF_RING_1"/>
    <property type="match status" value="1"/>
</dbReference>
<dbReference type="PROSITE" id="PS50089">
    <property type="entry name" value="ZF_RING_2"/>
    <property type="match status" value="1"/>
</dbReference>
<protein>
    <recommendedName>
        <fullName>E3 ubiquitin-protein ligase makorin-1</fullName>
        <ecNumber evidence="9">2.3.2.27</ecNumber>
    </recommendedName>
    <alternativeName>
        <fullName>RING finger protein 61</fullName>
    </alternativeName>
    <alternativeName>
        <fullName evidence="15">RING-type E3 ubiquitin transferase makorin-1</fullName>
    </alternativeName>
</protein>
<feature type="chain" id="PRO_0000055952" description="E3 ubiquitin-protein ligase makorin-1">
    <location>
        <begin position="1"/>
        <end position="482"/>
    </location>
</feature>
<feature type="zinc finger region" description="C3H1-type 1" evidence="2">
    <location>
        <begin position="55"/>
        <end position="82"/>
    </location>
</feature>
<feature type="zinc finger region" description="C3H1-type 2" evidence="2">
    <location>
        <begin position="84"/>
        <end position="111"/>
    </location>
</feature>
<feature type="zinc finger region" description="C3H1-type 3" evidence="2">
    <location>
        <begin position="208"/>
        <end position="235"/>
    </location>
</feature>
<feature type="zinc finger region" description="RING-type" evidence="1">
    <location>
        <begin position="281"/>
        <end position="335"/>
    </location>
</feature>
<feature type="zinc finger region" description="C3H1-type 4" evidence="2">
    <location>
        <begin position="364"/>
        <end position="393"/>
    </location>
</feature>
<feature type="region of interest" description="Disordered" evidence="3">
    <location>
        <begin position="26"/>
        <end position="52"/>
    </location>
</feature>
<feature type="region of interest" description="Makorin-type Cys-His">
    <location>
        <begin position="236"/>
        <end position="263"/>
    </location>
</feature>
<feature type="compositionally biased region" description="Low complexity" evidence="3">
    <location>
        <begin position="26"/>
        <end position="38"/>
    </location>
</feature>
<feature type="compositionally biased region" description="Gly residues" evidence="3">
    <location>
        <begin position="40"/>
        <end position="52"/>
    </location>
</feature>
<feature type="splice variant" id="VSP_040361" description="In isoform 2." evidence="12">
    <location>
        <begin position="1"/>
        <end position="64"/>
    </location>
</feature>
<feature type="splice variant" id="VSP_040362" description="In isoform 4." evidence="11 14">
    <location>
        <begin position="330"/>
        <end position="482"/>
    </location>
</feature>
<feature type="splice variant" id="VSP_040363" description="In isoform 3." evidence="13">
    <original>SNKACRYFDEGRGSCPFGGNCFYKHAYPDGRREEPQRQKVGTSSRYR</original>
    <variation>RYEHCSLFSSEEPNRAWVHFEKNGAALYTPTSFLPFFDFPGQFILSP</variation>
    <location>
        <begin position="366"/>
        <end position="412"/>
    </location>
</feature>
<feature type="splice variant" id="VSP_040364" description="In isoform 3." evidence="13">
    <location>
        <begin position="413"/>
        <end position="482"/>
    </location>
</feature>
<feature type="sequence variant" id="VAR_012161" description="In dbSNP:rs2272095." evidence="4 5 6">
    <original>V</original>
    <variation>L</variation>
    <location>
        <position position="243"/>
    </location>
</feature>
<feature type="sequence variant" id="VAR_057214" description="In dbSNP:rs1062786.">
    <original>V</original>
    <variation>A</variation>
    <location>
        <position position="439"/>
    </location>
</feature>
<feature type="mutagenesis site" description="Loss of E3 ligase activity, but no effect on transcription regulation." evidence="7">
    <original>H</original>
    <variation>E</variation>
    <location>
        <position position="307"/>
    </location>
</feature>
<feature type="sequence conflict" description="In Ref. 3; AAF17214." evidence="15" ref="3">
    <original>A</original>
    <variation>R</variation>
    <location>
        <position position="149"/>
    </location>
</feature>
<feature type="sequence conflict" description="In Ref. 5; BAG54426." evidence="15" ref="5">
    <original>K</original>
    <variation>E</variation>
    <location>
        <position position="197"/>
    </location>
</feature>
<feature type="sequence conflict" description="In Ref. 3; AAF17214." evidence="15" ref="3">
    <original>QR</original>
    <variation>S</variation>
    <location>
        <begin position="274"/>
        <end position="275"/>
    </location>
</feature>
<feature type="sequence conflict" description="In Ref. 1; AAF17487." evidence="15" ref="1">
    <original>GR</original>
    <variation>AG</variation>
    <location>
        <begin position="395"/>
        <end position="396"/>
    </location>
</feature>
<organism>
    <name type="scientific">Homo sapiens</name>
    <name type="common">Human</name>
    <dbReference type="NCBI Taxonomy" id="9606"/>
    <lineage>
        <taxon>Eukaryota</taxon>
        <taxon>Metazoa</taxon>
        <taxon>Chordata</taxon>
        <taxon>Craniata</taxon>
        <taxon>Vertebrata</taxon>
        <taxon>Euteleostomi</taxon>
        <taxon>Mammalia</taxon>
        <taxon>Eutheria</taxon>
        <taxon>Euarchontoglires</taxon>
        <taxon>Primates</taxon>
        <taxon>Haplorrhini</taxon>
        <taxon>Catarrhini</taxon>
        <taxon>Hominidae</taxon>
        <taxon>Homo</taxon>
    </lineage>
</organism>
<proteinExistence type="evidence at protein level"/>
<reference key="1">
    <citation type="journal article" date="2000" name="Genomics">
        <title>The ancient source of a distinct gene family encoding proteins featuring RING and C(3)H zinc-finger motifs with abundant expression in developing brain and nervous system.</title>
        <authorList>
            <person name="Gray T.A."/>
            <person name="Hernandez L."/>
            <person name="Carey A.H."/>
            <person name="Schaldach M.A."/>
            <person name="Smithwick M.J."/>
            <person name="Rus K."/>
            <person name="Marshall Graves J.A."/>
            <person name="Stewart C.L."/>
            <person name="Nicholls R.D."/>
        </authorList>
    </citation>
    <scope>NUCLEOTIDE SEQUENCE [GENOMIC DNA / MRNA] (ISOFORM 1)</scope>
    <scope>VARIANT LEU-243</scope>
    <scope>TISSUE SPECIFICITY</scope>
</reference>
<reference key="2">
    <citation type="submission" date="2006-03" db="EMBL/GenBank/DDBJ databases">
        <title>Role of trans-acting factors in the subcellular transport of vasopressin mRNA.</title>
        <authorList>
            <person name="Miroci H."/>
            <person name="Mohr E."/>
        </authorList>
    </citation>
    <scope>NUCLEOTIDE SEQUENCE [MRNA] (ISOFORM 4)</scope>
    <source>
        <tissue>Brain</tissue>
    </source>
</reference>
<reference key="3">
    <citation type="journal article" date="2000" name="Proc. Natl. Acad. Sci. U.S.A.">
        <title>Gene expression profiling in the human hypothalamus-pituitary-adrenal axis and full-length cDNA cloning.</title>
        <authorList>
            <person name="Hu R.-M."/>
            <person name="Han Z.-G."/>
            <person name="Song H.-D."/>
            <person name="Peng Y.-D."/>
            <person name="Huang Q.-H."/>
            <person name="Ren S.-X."/>
            <person name="Gu Y.-J."/>
            <person name="Huang C.-H."/>
            <person name="Li Y.-B."/>
            <person name="Jiang C.-L."/>
            <person name="Fu G."/>
            <person name="Zhang Q.-H."/>
            <person name="Gu B.-W."/>
            <person name="Dai M."/>
            <person name="Mao Y.-F."/>
            <person name="Gao G.-F."/>
            <person name="Rong R."/>
            <person name="Ye M."/>
            <person name="Zhou J."/>
            <person name="Xu S.-H."/>
            <person name="Gu J."/>
            <person name="Shi J.-X."/>
            <person name="Jin W.-R."/>
            <person name="Zhang C.-K."/>
            <person name="Wu T.-M."/>
            <person name="Huang G.-Y."/>
            <person name="Chen Z."/>
            <person name="Chen M.-D."/>
            <person name="Chen J.-L."/>
        </authorList>
    </citation>
    <scope>NUCLEOTIDE SEQUENCE [LARGE SCALE MRNA] (ISOFORM 4)</scope>
    <source>
        <tissue>Adrenal gland</tissue>
    </source>
</reference>
<reference key="4">
    <citation type="journal article" date="2001" name="Genome Res.">
        <title>Towards a catalog of human genes and proteins: sequencing and analysis of 500 novel complete protein coding human cDNAs.</title>
        <authorList>
            <person name="Wiemann S."/>
            <person name="Weil B."/>
            <person name="Wellenreuther R."/>
            <person name="Gassenhuber J."/>
            <person name="Glassl S."/>
            <person name="Ansorge W."/>
            <person name="Boecher M."/>
            <person name="Bloecker H."/>
            <person name="Bauersachs S."/>
            <person name="Blum H."/>
            <person name="Lauber J."/>
            <person name="Duesterhoeft A."/>
            <person name="Beyer A."/>
            <person name="Koehrer K."/>
            <person name="Strack N."/>
            <person name="Mewes H.-W."/>
            <person name="Ottenwaelder B."/>
            <person name="Obermaier B."/>
            <person name="Tampe J."/>
            <person name="Heubner D."/>
            <person name="Wambutt R."/>
            <person name="Korn B."/>
            <person name="Klein M."/>
            <person name="Poustka A."/>
        </authorList>
    </citation>
    <scope>NUCLEOTIDE SEQUENCE [LARGE SCALE MRNA] (ISOFORM 1)</scope>
    <source>
        <tissue>Testis</tissue>
    </source>
</reference>
<reference key="5">
    <citation type="journal article" date="2004" name="Nat. Genet.">
        <title>Complete sequencing and characterization of 21,243 full-length human cDNAs.</title>
        <authorList>
            <person name="Ota T."/>
            <person name="Suzuki Y."/>
            <person name="Nishikawa T."/>
            <person name="Otsuki T."/>
            <person name="Sugiyama T."/>
            <person name="Irie R."/>
            <person name="Wakamatsu A."/>
            <person name="Hayashi K."/>
            <person name="Sato H."/>
            <person name="Nagai K."/>
            <person name="Kimura K."/>
            <person name="Makita H."/>
            <person name="Sekine M."/>
            <person name="Obayashi M."/>
            <person name="Nishi T."/>
            <person name="Shibahara T."/>
            <person name="Tanaka T."/>
            <person name="Ishii S."/>
            <person name="Yamamoto J."/>
            <person name="Saito K."/>
            <person name="Kawai Y."/>
            <person name="Isono Y."/>
            <person name="Nakamura Y."/>
            <person name="Nagahari K."/>
            <person name="Murakami K."/>
            <person name="Yasuda T."/>
            <person name="Iwayanagi T."/>
            <person name="Wagatsuma M."/>
            <person name="Shiratori A."/>
            <person name="Sudo H."/>
            <person name="Hosoiri T."/>
            <person name="Kaku Y."/>
            <person name="Kodaira H."/>
            <person name="Kondo H."/>
            <person name="Sugawara M."/>
            <person name="Takahashi M."/>
            <person name="Kanda K."/>
            <person name="Yokoi T."/>
            <person name="Furuya T."/>
            <person name="Kikkawa E."/>
            <person name="Omura Y."/>
            <person name="Abe K."/>
            <person name="Kamihara K."/>
            <person name="Katsuta N."/>
            <person name="Sato K."/>
            <person name="Tanikawa M."/>
            <person name="Yamazaki M."/>
            <person name="Ninomiya K."/>
            <person name="Ishibashi T."/>
            <person name="Yamashita H."/>
            <person name="Murakawa K."/>
            <person name="Fujimori K."/>
            <person name="Tanai H."/>
            <person name="Kimata M."/>
            <person name="Watanabe M."/>
            <person name="Hiraoka S."/>
            <person name="Chiba Y."/>
            <person name="Ishida S."/>
            <person name="Ono Y."/>
            <person name="Takiguchi S."/>
            <person name="Watanabe S."/>
            <person name="Yosida M."/>
            <person name="Hotuta T."/>
            <person name="Kusano J."/>
            <person name="Kanehori K."/>
            <person name="Takahashi-Fujii A."/>
            <person name="Hara H."/>
            <person name="Tanase T.-O."/>
            <person name="Nomura Y."/>
            <person name="Togiya S."/>
            <person name="Komai F."/>
            <person name="Hara R."/>
            <person name="Takeuchi K."/>
            <person name="Arita M."/>
            <person name="Imose N."/>
            <person name="Musashino K."/>
            <person name="Yuuki H."/>
            <person name="Oshima A."/>
            <person name="Sasaki N."/>
            <person name="Aotsuka S."/>
            <person name="Yoshikawa Y."/>
            <person name="Matsunawa H."/>
            <person name="Ichihara T."/>
            <person name="Shiohata N."/>
            <person name="Sano S."/>
            <person name="Moriya S."/>
            <person name="Momiyama H."/>
            <person name="Satoh N."/>
            <person name="Takami S."/>
            <person name="Terashima Y."/>
            <person name="Suzuki O."/>
            <person name="Nakagawa S."/>
            <person name="Senoh A."/>
            <person name="Mizoguchi H."/>
            <person name="Goto Y."/>
            <person name="Shimizu F."/>
            <person name="Wakebe H."/>
            <person name="Hishigaki H."/>
            <person name="Watanabe T."/>
            <person name="Sugiyama A."/>
            <person name="Takemoto M."/>
            <person name="Kawakami B."/>
            <person name="Yamazaki M."/>
            <person name="Watanabe K."/>
            <person name="Kumagai A."/>
            <person name="Itakura S."/>
            <person name="Fukuzumi Y."/>
            <person name="Fujimori Y."/>
            <person name="Komiyama M."/>
            <person name="Tashiro H."/>
            <person name="Tanigami A."/>
            <person name="Fujiwara T."/>
            <person name="Ono T."/>
            <person name="Yamada K."/>
            <person name="Fujii Y."/>
            <person name="Ozaki K."/>
            <person name="Hirao M."/>
            <person name="Ohmori Y."/>
            <person name="Kawabata A."/>
            <person name="Hikiji T."/>
            <person name="Kobatake N."/>
            <person name="Inagaki H."/>
            <person name="Ikema Y."/>
            <person name="Okamoto S."/>
            <person name="Okitani R."/>
            <person name="Kawakami T."/>
            <person name="Noguchi S."/>
            <person name="Itoh T."/>
            <person name="Shigeta K."/>
            <person name="Senba T."/>
            <person name="Matsumura K."/>
            <person name="Nakajima Y."/>
            <person name="Mizuno T."/>
            <person name="Morinaga M."/>
            <person name="Sasaki M."/>
            <person name="Togashi T."/>
            <person name="Oyama M."/>
            <person name="Hata H."/>
            <person name="Watanabe M."/>
            <person name="Komatsu T."/>
            <person name="Mizushima-Sugano J."/>
            <person name="Satoh T."/>
            <person name="Shirai Y."/>
            <person name="Takahashi Y."/>
            <person name="Nakagawa K."/>
            <person name="Okumura K."/>
            <person name="Nagase T."/>
            <person name="Nomura N."/>
            <person name="Kikuchi H."/>
            <person name="Masuho Y."/>
            <person name="Yamashita R."/>
            <person name="Nakai K."/>
            <person name="Yada T."/>
            <person name="Nakamura Y."/>
            <person name="Ohara O."/>
            <person name="Isogai T."/>
            <person name="Sugano S."/>
        </authorList>
    </citation>
    <scope>NUCLEOTIDE SEQUENCE [LARGE SCALE MRNA] (ISOFORMS 1 AND 2)</scope>
    <scope>VARIANT LEU-243</scope>
    <source>
        <tissue>Brain</tissue>
        <tissue>Placenta</tissue>
    </source>
</reference>
<reference key="6">
    <citation type="journal article" date="2003" name="Nature">
        <title>The DNA sequence of human chromosome 7.</title>
        <authorList>
            <person name="Hillier L.W."/>
            <person name="Fulton R.S."/>
            <person name="Fulton L.A."/>
            <person name="Graves T.A."/>
            <person name="Pepin K.H."/>
            <person name="Wagner-McPherson C."/>
            <person name="Layman D."/>
            <person name="Maas J."/>
            <person name="Jaeger S."/>
            <person name="Walker R."/>
            <person name="Wylie K."/>
            <person name="Sekhon M."/>
            <person name="Becker M.C."/>
            <person name="O'Laughlin M.D."/>
            <person name="Schaller M.E."/>
            <person name="Fewell G.A."/>
            <person name="Delehaunty K.D."/>
            <person name="Miner T.L."/>
            <person name="Nash W.E."/>
            <person name="Cordes M."/>
            <person name="Du H."/>
            <person name="Sun H."/>
            <person name="Edwards J."/>
            <person name="Bradshaw-Cordum H."/>
            <person name="Ali J."/>
            <person name="Andrews S."/>
            <person name="Isak A."/>
            <person name="Vanbrunt A."/>
            <person name="Nguyen C."/>
            <person name="Du F."/>
            <person name="Lamar B."/>
            <person name="Courtney L."/>
            <person name="Kalicki J."/>
            <person name="Ozersky P."/>
            <person name="Bielicki L."/>
            <person name="Scott K."/>
            <person name="Holmes A."/>
            <person name="Harkins R."/>
            <person name="Harris A."/>
            <person name="Strong C.M."/>
            <person name="Hou S."/>
            <person name="Tomlinson C."/>
            <person name="Dauphin-Kohlberg S."/>
            <person name="Kozlowicz-Reilly A."/>
            <person name="Leonard S."/>
            <person name="Rohlfing T."/>
            <person name="Rock S.M."/>
            <person name="Tin-Wollam A.-M."/>
            <person name="Abbott A."/>
            <person name="Minx P."/>
            <person name="Maupin R."/>
            <person name="Strowmatt C."/>
            <person name="Latreille P."/>
            <person name="Miller N."/>
            <person name="Johnson D."/>
            <person name="Murray J."/>
            <person name="Woessner J.P."/>
            <person name="Wendl M.C."/>
            <person name="Yang S.-P."/>
            <person name="Schultz B.R."/>
            <person name="Wallis J.W."/>
            <person name="Spieth J."/>
            <person name="Bieri T.A."/>
            <person name="Nelson J.O."/>
            <person name="Berkowicz N."/>
            <person name="Wohldmann P.E."/>
            <person name="Cook L.L."/>
            <person name="Hickenbotham M.T."/>
            <person name="Eldred J."/>
            <person name="Williams D."/>
            <person name="Bedell J.A."/>
            <person name="Mardis E.R."/>
            <person name="Clifton S.W."/>
            <person name="Chissoe S.L."/>
            <person name="Marra M.A."/>
            <person name="Raymond C."/>
            <person name="Haugen E."/>
            <person name="Gillett W."/>
            <person name="Zhou Y."/>
            <person name="James R."/>
            <person name="Phelps K."/>
            <person name="Iadanoto S."/>
            <person name="Bubb K."/>
            <person name="Simms E."/>
            <person name="Levy R."/>
            <person name="Clendenning J."/>
            <person name="Kaul R."/>
            <person name="Kent W.J."/>
            <person name="Furey T.S."/>
            <person name="Baertsch R.A."/>
            <person name="Brent M.R."/>
            <person name="Keibler E."/>
            <person name="Flicek P."/>
            <person name="Bork P."/>
            <person name="Suyama M."/>
            <person name="Bailey J.A."/>
            <person name="Portnoy M.E."/>
            <person name="Torrents D."/>
            <person name="Chinwalla A.T."/>
            <person name="Gish W.R."/>
            <person name="Eddy S.R."/>
            <person name="McPherson J.D."/>
            <person name="Olson M.V."/>
            <person name="Eichler E.E."/>
            <person name="Green E.D."/>
            <person name="Waterston R.H."/>
            <person name="Wilson R.K."/>
        </authorList>
    </citation>
    <scope>NUCLEOTIDE SEQUENCE [LARGE SCALE GENOMIC DNA]</scope>
</reference>
<reference key="7">
    <citation type="journal article" date="2003" name="Science">
        <title>Human chromosome 7: DNA sequence and biology.</title>
        <authorList>
            <person name="Scherer S.W."/>
            <person name="Cheung J."/>
            <person name="MacDonald J.R."/>
            <person name="Osborne L.R."/>
            <person name="Nakabayashi K."/>
            <person name="Herbrick J.-A."/>
            <person name="Carson A.R."/>
            <person name="Parker-Katiraee L."/>
            <person name="Skaug J."/>
            <person name="Khaja R."/>
            <person name="Zhang J."/>
            <person name="Hudek A.K."/>
            <person name="Li M."/>
            <person name="Haddad M."/>
            <person name="Duggan G.E."/>
            <person name="Fernandez B.A."/>
            <person name="Kanematsu E."/>
            <person name="Gentles S."/>
            <person name="Christopoulos C.C."/>
            <person name="Choufani S."/>
            <person name="Kwasnicka D."/>
            <person name="Zheng X.H."/>
            <person name="Lai Z."/>
            <person name="Nusskern D.R."/>
            <person name="Zhang Q."/>
            <person name="Gu Z."/>
            <person name="Lu F."/>
            <person name="Zeesman S."/>
            <person name="Nowaczyk M.J."/>
            <person name="Teshima I."/>
            <person name="Chitayat D."/>
            <person name="Shuman C."/>
            <person name="Weksberg R."/>
            <person name="Zackai E.H."/>
            <person name="Grebe T.A."/>
            <person name="Cox S.R."/>
            <person name="Kirkpatrick S.J."/>
            <person name="Rahman N."/>
            <person name="Friedman J.M."/>
            <person name="Heng H.H.Q."/>
            <person name="Pelicci P.G."/>
            <person name="Lo-Coco F."/>
            <person name="Belloni E."/>
            <person name="Shaffer L.G."/>
            <person name="Pober B."/>
            <person name="Morton C.C."/>
            <person name="Gusella J.F."/>
            <person name="Bruns G.A.P."/>
            <person name="Korf B.R."/>
            <person name="Quade B.J."/>
            <person name="Ligon A.H."/>
            <person name="Ferguson H."/>
            <person name="Higgins A.W."/>
            <person name="Leach N.T."/>
            <person name="Herrick S.R."/>
            <person name="Lemyre E."/>
            <person name="Farra C.G."/>
            <person name="Kim H.-G."/>
            <person name="Summers A.M."/>
            <person name="Gripp K.W."/>
            <person name="Roberts W."/>
            <person name="Szatmari P."/>
            <person name="Winsor E.J.T."/>
            <person name="Grzeschik K.-H."/>
            <person name="Teebi A."/>
            <person name="Minassian B.A."/>
            <person name="Kere J."/>
            <person name="Armengol L."/>
            <person name="Pujana M.A."/>
            <person name="Estivill X."/>
            <person name="Wilson M.D."/>
            <person name="Koop B.F."/>
            <person name="Tosi S."/>
            <person name="Moore G.E."/>
            <person name="Boright A.P."/>
            <person name="Zlotorynski E."/>
            <person name="Kerem B."/>
            <person name="Kroisel P.M."/>
            <person name="Petek E."/>
            <person name="Oscier D.G."/>
            <person name="Mould S.J."/>
            <person name="Doehner H."/>
            <person name="Doehner K."/>
            <person name="Rommens J.M."/>
            <person name="Vincent J.B."/>
            <person name="Venter J.C."/>
            <person name="Li P.W."/>
            <person name="Mural R.J."/>
            <person name="Adams M.D."/>
            <person name="Tsui L.-C."/>
        </authorList>
    </citation>
    <scope>NUCLEOTIDE SEQUENCE [LARGE SCALE GENOMIC DNA]</scope>
</reference>
<reference key="8">
    <citation type="submission" date="2005-07" db="EMBL/GenBank/DDBJ databases">
        <authorList>
            <person name="Mural R.J."/>
            <person name="Istrail S."/>
            <person name="Sutton G.G."/>
            <person name="Florea L."/>
            <person name="Halpern A.L."/>
            <person name="Mobarry C.M."/>
            <person name="Lippert R."/>
            <person name="Walenz B."/>
            <person name="Shatkay H."/>
            <person name="Dew I."/>
            <person name="Miller J.R."/>
            <person name="Flanigan M.J."/>
            <person name="Edwards N.J."/>
            <person name="Bolanos R."/>
            <person name="Fasulo D."/>
            <person name="Halldorsson B.V."/>
            <person name="Hannenhalli S."/>
            <person name="Turner R."/>
            <person name="Yooseph S."/>
            <person name="Lu F."/>
            <person name="Nusskern D.R."/>
            <person name="Shue B.C."/>
            <person name="Zheng X.H."/>
            <person name="Zhong F."/>
            <person name="Delcher A.L."/>
            <person name="Huson D.H."/>
            <person name="Kravitz S.A."/>
            <person name="Mouchard L."/>
            <person name="Reinert K."/>
            <person name="Remington K.A."/>
            <person name="Clark A.G."/>
            <person name="Waterman M.S."/>
            <person name="Eichler E.E."/>
            <person name="Adams M.D."/>
            <person name="Hunkapiller M.W."/>
            <person name="Myers E.W."/>
            <person name="Venter J.C."/>
        </authorList>
    </citation>
    <scope>NUCLEOTIDE SEQUENCE [LARGE SCALE GENOMIC DNA]</scope>
</reference>
<reference key="9">
    <citation type="journal article" date="2004" name="Genome Res.">
        <title>The status, quality, and expansion of the NIH full-length cDNA project: the Mammalian Gene Collection (MGC).</title>
        <authorList>
            <consortium name="The MGC Project Team"/>
        </authorList>
    </citation>
    <scope>NUCLEOTIDE SEQUENCE [LARGE SCALE MRNA] (ISOFORM 1)</scope>
    <scope>VARIANT LEU-243</scope>
    <source>
        <tissue>Brain</tissue>
        <tissue>Skin</tissue>
    </source>
</reference>
<reference key="10">
    <citation type="submission" date="2005-03" db="EMBL/GenBank/DDBJ databases">
        <title>Homo sapiens protein coding cDNA.</title>
        <authorList>
            <person name="Totoki Y."/>
            <person name="Toyoda A."/>
            <person name="Takeda T."/>
            <person name="Sakaki Y."/>
            <person name="Tanaka A."/>
            <person name="Yokoyama S."/>
            <person name="Ohara O."/>
            <person name="Nagase T."/>
            <person name="Kikuno R.F."/>
        </authorList>
    </citation>
    <scope>NUCLEOTIDE SEQUENCE [LARGE SCALE MRNA] OF 4-452 (ISOFORM 3)</scope>
    <source>
        <tissue>Brain</tissue>
    </source>
</reference>
<reference key="11">
    <citation type="journal article" date="2005" name="Genes Dev.">
        <title>Ubiquitin ligase MKRN1 modulates telomere length homeostasis through a proteolysis of hTERT.</title>
        <authorList>
            <person name="Kim J.H."/>
            <person name="Park S.-M."/>
            <person name="Kang M.R."/>
            <person name="Oh S.-Y."/>
            <person name="Lee T.H."/>
            <person name="Muller M.T."/>
            <person name="Chung I.K."/>
        </authorList>
    </citation>
    <scope>MUTAGENESIS OF HIS-307</scope>
    <scope>UBIQUITINATION</scope>
    <scope>INTERACTION WITH TERT</scope>
</reference>
<reference key="12">
    <citation type="journal article" date="2006" name="Endocrine">
        <title>Makorin RING finger protein 1 (MKRN1) has negative and positive effects on RNA polymerase II-dependent transcription.</title>
        <authorList>
            <person name="Omwancha J."/>
            <person name="Zhou X.-F."/>
            <person name="Chen S.-Y."/>
            <person name="Baslan T."/>
            <person name="Fisher C.J."/>
            <person name="Zheng Z."/>
            <person name="Cai C."/>
            <person name="Shemshedini L."/>
        </authorList>
    </citation>
    <scope>FUNCTION</scope>
    <scope>TISSUE SPECIFICITY</scope>
</reference>
<reference key="13">
    <citation type="journal article" date="2009" name="BMC Cancer">
        <title>Identification of Makorin 1 as a novel SEREX antigen of esophageal squamous cell carcinoma.</title>
        <authorList>
            <person name="Shimada H."/>
            <person name="Shiratori T."/>
            <person name="Yasuraoka M."/>
            <person name="Kagaya A."/>
            <person name="Kuboshima M."/>
            <person name="Nomura F."/>
            <person name="Takiguchi M."/>
            <person name="Ochiai T."/>
            <person name="Matsubara H."/>
            <person name="Hiwasa T."/>
        </authorList>
    </citation>
    <scope>INDUCTION</scope>
</reference>
<reference key="14">
    <citation type="journal article" date="2009" name="EMBO J.">
        <title>Differential regulation of p53 and p21 by MKRN1 E3 ligase controls cell cycle arrest and apoptosis.</title>
        <authorList>
            <person name="Lee E.-W."/>
            <person name="Lee M.-S."/>
            <person name="Camus S."/>
            <person name="Ghim J."/>
            <person name="Yang M.-R."/>
            <person name="Oh W."/>
            <person name="Ha N.-C."/>
            <person name="Lane D.P."/>
            <person name="Song J."/>
        </authorList>
    </citation>
    <scope>FUNCTION</scope>
    <scope>CATALYTIC ACTIVITY</scope>
    <scope>PATHWAY</scope>
    <scope>INTERACTION WITH TP53 AND CDKN1A</scope>
</reference>
<keyword id="KW-0025">Alternative splicing</keyword>
<keyword id="KW-0479">Metal-binding</keyword>
<keyword id="KW-1267">Proteomics identification</keyword>
<keyword id="KW-1185">Reference proteome</keyword>
<keyword id="KW-0677">Repeat</keyword>
<keyword id="KW-0808">Transferase</keyword>
<keyword id="KW-0832">Ubl conjugation</keyword>
<keyword id="KW-0833">Ubl conjugation pathway</keyword>
<keyword id="KW-0862">Zinc</keyword>
<keyword id="KW-0863">Zinc-finger</keyword>
<accession>Q9UHC7</accession>
<accession>A4D1T7</accession>
<accession>B3KXB4</accession>
<accession>Q256Y7</accession>
<accession>Q59G11</accession>
<accession>Q6GSF1</accession>
<accession>Q9H0G0</accession>
<accession>Q9UEZ7</accession>
<accession>Q9UHW2</accession>
<sequence length="482" mass="53349">MAEAATPGTTATTSGAGAAAATAAAASPTPIPTVTAPSLGAGGGGGGSDGSGGGWTKQVTCRYFMHGVCKEGDNCRYSHDLSDSPYSVVCKYFQRGYCIYGDRCRYEHSKPLKQEEATATELTTKSSLAASSSLSSIVGPLVEMNTGEAESRNSNFATVGAGSEDWVNAIEFVPGQPYCGRTAPSCTEAPLQGSVTKEESEKEQTAVETKKQLCPYAAVGECRYGENCVYLHGDSCDMCGLQVLHPMDAAQRSQHIKSCIEAHEKDMELSFAVQRSKDMVCGICMEVVYEKANPSERRFGILSNCNHTYCLKCIRKWRSAKQFESKIIKSCPECRITSNFVIPSEYWVEEKEEKQKLILKYKEAMSNKACRYFDEGRGSCPFGGNCFYKHAYPDGRREEPQRQKVGTSSRYRAQRRNHFWELIEERENSNPFDNDEEEVVTFELGEMLLMLLAAGGDDELTDSEDEWDLFHDELEDFYDLDL</sequence>
<evidence type="ECO:0000255" key="1">
    <source>
        <dbReference type="PROSITE-ProRule" id="PRU00175"/>
    </source>
</evidence>
<evidence type="ECO:0000255" key="2">
    <source>
        <dbReference type="PROSITE-ProRule" id="PRU00723"/>
    </source>
</evidence>
<evidence type="ECO:0000256" key="3">
    <source>
        <dbReference type="SAM" id="MobiDB-lite"/>
    </source>
</evidence>
<evidence type="ECO:0000269" key="4">
    <source>
    </source>
</evidence>
<evidence type="ECO:0000269" key="5">
    <source>
    </source>
</evidence>
<evidence type="ECO:0000269" key="6">
    <source>
    </source>
</evidence>
<evidence type="ECO:0000269" key="7">
    <source>
    </source>
</evidence>
<evidence type="ECO:0000269" key="8">
    <source>
    </source>
</evidence>
<evidence type="ECO:0000269" key="9">
    <source>
    </source>
</evidence>
<evidence type="ECO:0000269" key="10">
    <source>
    </source>
</evidence>
<evidence type="ECO:0000303" key="11">
    <source>
    </source>
</evidence>
<evidence type="ECO:0000303" key="12">
    <source>
    </source>
</evidence>
<evidence type="ECO:0000303" key="13">
    <source ref="10"/>
</evidence>
<evidence type="ECO:0000303" key="14">
    <source ref="2"/>
</evidence>
<evidence type="ECO:0000305" key="15"/>
<name>MKRN1_HUMAN</name>
<comment type="function">
    <text evidence="8 9">E3 ubiquitin ligase catalyzing the covalent attachment of ubiquitin moieties onto substrate proteins. These substrates include FILIP1, p53/TP53, CDKN1A and TERT. Keeps cells alive by suppressing p53/TP53 under normal conditions, but stimulates apoptosis by repressing CDKN1A under stress conditions. Acts as a negative regulator of telomerase. Has negative and positive effects on RNA polymerase II-dependent transcription.</text>
</comment>
<comment type="catalytic activity">
    <reaction evidence="9">
        <text>S-ubiquitinyl-[E2 ubiquitin-conjugating enzyme]-L-cysteine + [acceptor protein]-L-lysine = [E2 ubiquitin-conjugating enzyme]-L-cysteine + N(6)-ubiquitinyl-[acceptor protein]-L-lysine.</text>
        <dbReference type="EC" id="2.3.2.27"/>
    </reaction>
</comment>
<comment type="pathway">
    <text evidence="9">Protein modification; protein ubiquitination.</text>
</comment>
<comment type="subunit">
    <text evidence="7 9">Interacts with p53/TP53 and CDKN1A. Interacts with TERT, modulating telomere length homeostasis.</text>
</comment>
<comment type="interaction">
    <interactant intactId="EBI-373524">
        <id>Q9UHC7</id>
    </interactant>
    <interactant intactId="EBI-358049">
        <id>Q13895</id>
        <label>BYSL</label>
    </interactant>
    <organismsDiffer>false</organismsDiffer>
    <experiments>3</experiments>
</comment>
<comment type="interaction">
    <interactant intactId="EBI-373524">
        <id>Q9UHC7</id>
    </interactant>
    <interactant intactId="EBI-375077">
        <id>P38936</id>
        <label>CDKN1A</label>
    </interactant>
    <organismsDiffer>false</organismsDiffer>
    <experiments>5</experiments>
</comment>
<comment type="interaction">
    <interactant intactId="EBI-373524">
        <id>Q9UHC7</id>
    </interactant>
    <interactant intactId="EBI-77321">
        <id>Q9UER7</id>
        <label>DAXX</label>
    </interactant>
    <organismsDiffer>false</organismsDiffer>
    <experiments>3</experiments>
</comment>
<comment type="interaction">
    <interactant intactId="EBI-373524">
        <id>Q9UHC7</id>
    </interactant>
    <interactant intactId="EBI-719941">
        <id>Q3B820</id>
        <label>FAM161A</label>
    </interactant>
    <organismsDiffer>false</organismsDiffer>
    <experiments>3</experiments>
</comment>
<comment type="interaction">
    <interactant intactId="EBI-373524">
        <id>Q9UHC7</id>
    </interactant>
    <interactant intactId="EBI-11980301">
        <id>Q8N3F0</id>
        <label>MTURN</label>
    </interactant>
    <organismsDiffer>false</organismsDiffer>
    <experiments>3</experiments>
</comment>
<comment type="interaction">
    <interactant intactId="EBI-373524">
        <id>Q9UHC7</id>
    </interactant>
    <interactant intactId="EBI-747693">
        <id>P41227</id>
        <label>NAA10</label>
    </interactant>
    <organismsDiffer>false</organismsDiffer>
    <experiments>5</experiments>
</comment>
<comment type="interaction">
    <interactant intactId="EBI-373524">
        <id>Q9UHC7</id>
    </interactant>
    <interactant intactId="EBI-746259">
        <id>Q96DC9</id>
        <label>OTUB2</label>
    </interactant>
    <organismsDiffer>false</organismsDiffer>
    <experiments>3</experiments>
</comment>
<comment type="interaction">
    <interactant intactId="EBI-373524">
        <id>Q9UHC7</id>
    </interactant>
    <interactant intactId="EBI-746453">
        <id>P54725</id>
        <label>RAD23A</label>
    </interactant>
    <organismsDiffer>false</organismsDiffer>
    <experiments>5</experiments>
</comment>
<comment type="interaction">
    <interactant intactId="EBI-373524">
        <id>Q9UHC7</id>
    </interactant>
    <interactant intactId="EBI-954531">
        <id>P54727</id>
        <label>RAD23B</label>
    </interactant>
    <organismsDiffer>false</organismsDiffer>
    <experiments>3</experiments>
</comment>
<comment type="interaction">
    <interactant intactId="EBI-373524">
        <id>Q9UHC7</id>
    </interactant>
    <interactant intactId="EBI-727004">
        <id>O00560</id>
        <label>SDCBP</label>
    </interactant>
    <organismsDiffer>false</organismsDiffer>
    <experiments>3</experiments>
</comment>
<comment type="interaction">
    <interactant intactId="EBI-373524">
        <id>Q9UHC7</id>
    </interactant>
    <interactant intactId="EBI-366083">
        <id>P04637</id>
        <label>TP53</label>
    </interactant>
    <organismsDiffer>false</organismsDiffer>
    <experiments>8</experiments>
</comment>
<comment type="interaction">
    <interactant intactId="EBI-373524">
        <id>Q9UHC7</id>
    </interactant>
    <interactant intactId="EBI-7353612">
        <id>P57075-2</id>
        <label>UBASH3A</label>
    </interactant>
    <organismsDiffer>false</organismsDiffer>
    <experiments>3</experiments>
</comment>
<comment type="interaction">
    <interactant intactId="EBI-373524">
        <id>Q9UHC7</id>
    </interactant>
    <interactant intactId="EBI-743540">
        <id>P51668</id>
        <label>UBE2D1</label>
    </interactant>
    <organismsDiffer>false</organismsDiffer>
    <experiments>3</experiments>
</comment>
<comment type="interaction">
    <interactant intactId="EBI-373524">
        <id>Q9UHC7</id>
    </interactant>
    <interactant intactId="EBI-745527">
        <id>Q9Y2X8</id>
        <label>UBE2D4</label>
    </interactant>
    <organismsDiffer>false</organismsDiffer>
    <experiments>3</experiments>
</comment>
<comment type="interaction">
    <interactant intactId="EBI-373524">
        <id>Q9UHC7</id>
    </interactant>
    <interactant intactId="EBI-2510804">
        <id>Q5VVQ6</id>
        <label>YOD1</label>
    </interactant>
    <organismsDiffer>false</organismsDiffer>
    <experiments>5</experiments>
</comment>
<comment type="alternative products">
    <event type="alternative splicing"/>
    <isoform>
        <id>Q9UHC7-1</id>
        <name>1</name>
        <sequence type="displayed"/>
    </isoform>
    <isoform>
        <id>Q9UHC7-2</id>
        <name>2</name>
        <sequence type="described" ref="VSP_040361"/>
    </isoform>
    <isoform>
        <id>Q9UHC7-3</id>
        <name>3</name>
        <sequence type="described" ref="VSP_040363 VSP_040364"/>
    </isoform>
    <isoform>
        <id>Q9UHC7-4</id>
        <name>4</name>
        <sequence type="described" ref="VSP_040362"/>
    </isoform>
</comment>
<comment type="tissue specificity">
    <text evidence="4 8">Ubiquitous.</text>
</comment>
<comment type="induction">
    <text evidence="10">Frequently induced in esophageal squamous cell carcinoma (SCC) tissues.</text>
</comment>
<comment type="PTM">
    <text evidence="7">Auto-ubiquitinated; which leads to proteasomal degradation.</text>
</comment>